<reference key="1">
    <citation type="journal article" date="1995" name="Science">
        <title>The minimal gene complement of Mycoplasma genitalium.</title>
        <authorList>
            <person name="Fraser C.M."/>
            <person name="Gocayne J.D."/>
            <person name="White O."/>
            <person name="Adams M.D."/>
            <person name="Clayton R.A."/>
            <person name="Fleischmann R.D."/>
            <person name="Bult C.J."/>
            <person name="Kerlavage A.R."/>
            <person name="Sutton G.G."/>
            <person name="Kelley J.M."/>
            <person name="Fritchman J.L."/>
            <person name="Weidman J.F."/>
            <person name="Small K.V."/>
            <person name="Sandusky M."/>
            <person name="Fuhrmann J.L."/>
            <person name="Nguyen D.T."/>
            <person name="Utterback T.R."/>
            <person name="Saudek D.M."/>
            <person name="Phillips C.A."/>
            <person name="Merrick J.M."/>
            <person name="Tomb J.-F."/>
            <person name="Dougherty B.A."/>
            <person name="Bott K.F."/>
            <person name="Hu P.-C."/>
            <person name="Lucier T.S."/>
            <person name="Peterson S.N."/>
            <person name="Smith H.O."/>
            <person name="Hutchison C.A. III"/>
            <person name="Venter J.C."/>
        </authorList>
    </citation>
    <scope>NUCLEOTIDE SEQUENCE [LARGE SCALE GENOMIC DNA]</scope>
    <source>
        <strain>ATCC 33530 / DSM 19775 / NCTC 10195 / G37</strain>
    </source>
</reference>
<reference key="2">
    <citation type="journal article" date="2006" name="Proc. Natl. Acad. Sci. U.S.A.">
        <title>Essential genes of a minimal bacterium.</title>
        <authorList>
            <person name="Glass J.I."/>
            <person name="Assad-Garcia N."/>
            <person name="Alperovich N."/>
            <person name="Yooseph S."/>
            <person name="Lewis M.R."/>
            <person name="Maruf M."/>
            <person name="Hutchison C.A. III"/>
            <person name="Smith H.O."/>
            <person name="Venter J.C."/>
        </authorList>
    </citation>
    <scope>SEQUENCE REVISION</scope>
    <scope>DISRUPTION PHENOTYPE</scope>
    <source>
        <strain>ATCC 33530 / DSM 19775 / NCTC 10195 / G37</strain>
    </source>
</reference>
<accession>P47295</accession>
<feature type="chain" id="PRO_0000063146" description="Purine nucleoside phosphorylase DeoD-type">
    <location>
        <begin position="1"/>
        <end position="238"/>
    </location>
</feature>
<feature type="active site" description="Proton donor" evidence="2">
    <location>
        <position position="206"/>
    </location>
</feature>
<feature type="binding site" evidence="1">
    <location>
        <position position="4"/>
    </location>
    <ligand>
        <name>a purine D-ribonucleoside</name>
        <dbReference type="ChEBI" id="CHEBI:142355"/>
        <note>ligand shared between dimeric partners</note>
    </ligand>
</feature>
<feature type="binding site" description="in other chain" evidence="1">
    <location>
        <position position="20"/>
    </location>
    <ligand>
        <name>phosphate</name>
        <dbReference type="ChEBI" id="CHEBI:43474"/>
        <note>ligand shared between dimeric partners</note>
    </ligand>
</feature>
<feature type="binding site" description="in other chain" evidence="1">
    <location>
        <position position="24"/>
    </location>
    <ligand>
        <name>phosphate</name>
        <dbReference type="ChEBI" id="CHEBI:43474"/>
        <note>ligand shared between dimeric partners</note>
    </ligand>
</feature>
<feature type="binding site" evidence="1">
    <location>
        <position position="43"/>
    </location>
    <ligand>
        <name>phosphate</name>
        <dbReference type="ChEBI" id="CHEBI:43474"/>
        <note>ligand shared between dimeric partners</note>
    </ligand>
</feature>
<feature type="binding site" description="in other chain" evidence="1">
    <location>
        <begin position="87"/>
        <end position="90"/>
    </location>
    <ligand>
        <name>phosphate</name>
        <dbReference type="ChEBI" id="CHEBI:43474"/>
        <note>ligand shared between dimeric partners</note>
    </ligand>
</feature>
<feature type="binding site" description="in other chain" evidence="1">
    <location>
        <begin position="181"/>
        <end position="183"/>
    </location>
    <ligand>
        <name>a purine D-ribonucleoside</name>
        <dbReference type="ChEBI" id="CHEBI:142355"/>
        <note>ligand shared between dimeric partners</note>
    </ligand>
</feature>
<feature type="binding site" description="in other chain" evidence="1">
    <location>
        <begin position="205"/>
        <end position="206"/>
    </location>
    <ligand>
        <name>a purine D-ribonucleoside</name>
        <dbReference type="ChEBI" id="CHEBI:142355"/>
        <note>ligand shared between dimeric partners</note>
    </ligand>
</feature>
<feature type="site" description="Important for catalytic activity" evidence="2">
    <location>
        <position position="219"/>
    </location>
</feature>
<organism>
    <name type="scientific">Mycoplasma genitalium (strain ATCC 33530 / DSM 19775 / NCTC 10195 / G37)</name>
    <name type="common">Mycoplasmoides genitalium</name>
    <dbReference type="NCBI Taxonomy" id="243273"/>
    <lineage>
        <taxon>Bacteria</taxon>
        <taxon>Bacillati</taxon>
        <taxon>Mycoplasmatota</taxon>
        <taxon>Mycoplasmoidales</taxon>
        <taxon>Mycoplasmoidaceae</taxon>
        <taxon>Mycoplasmoides</taxon>
    </lineage>
</organism>
<sequence length="238" mass="26509">MTPHISAKKDDISKVVLMPGDPLRAKWIAEQFLDQAKLVNEVRGMFAYTGQYKSKTVTVMGHGMGIPSIGIYSYELMNFYEVETIIRIGSCGALAPQLKLKDLVIASKAWSESIYAKDMGVEIPEDKILFATSSLVELAKETAIKNKLDFHEGLVFCEDAFYQTRKDVISLAKEKNSLAVEMEAHALYANAILLKKKALTLLTVSDSLVTHEALSSELRQKSFKQMALLALEMTQKLI</sequence>
<name>DEOD_MYCGE</name>
<proteinExistence type="inferred from homology"/>
<comment type="function">
    <text evidence="2">Catalyzes the reversible phosphorolytic breakdown of the N-glycosidic bond in the beta-(deoxy)ribonucleoside molecules, with the formation of the corresponding free purine bases and pentose-1-phosphate.</text>
</comment>
<comment type="catalytic activity">
    <reaction evidence="2">
        <text>a purine D-ribonucleoside + phosphate = a purine nucleobase + alpha-D-ribose 1-phosphate</text>
        <dbReference type="Rhea" id="RHEA:19805"/>
        <dbReference type="ChEBI" id="CHEBI:26386"/>
        <dbReference type="ChEBI" id="CHEBI:43474"/>
        <dbReference type="ChEBI" id="CHEBI:57720"/>
        <dbReference type="ChEBI" id="CHEBI:142355"/>
        <dbReference type="EC" id="2.4.2.1"/>
    </reaction>
</comment>
<comment type="catalytic activity">
    <reaction evidence="2">
        <text>a purine 2'-deoxy-D-ribonucleoside + phosphate = a purine nucleobase + 2-deoxy-alpha-D-ribose 1-phosphate</text>
        <dbReference type="Rhea" id="RHEA:36431"/>
        <dbReference type="ChEBI" id="CHEBI:26386"/>
        <dbReference type="ChEBI" id="CHEBI:43474"/>
        <dbReference type="ChEBI" id="CHEBI:57259"/>
        <dbReference type="ChEBI" id="CHEBI:142361"/>
        <dbReference type="EC" id="2.4.2.1"/>
    </reaction>
</comment>
<comment type="subunit">
    <text evidence="2">Homohexamer; trimer of homodimers.</text>
</comment>
<comment type="disruption phenotype">
    <text evidence="3">Probably essential, it was not disrupted in a global transposon mutagenesis study.</text>
</comment>
<comment type="similarity">
    <text evidence="2 4">Belongs to the PNP/UDP phosphorylase family.</text>
</comment>
<keyword id="KW-0328">Glycosyltransferase</keyword>
<keyword id="KW-1185">Reference proteome</keyword>
<keyword id="KW-0808">Transferase</keyword>
<protein>
    <recommendedName>
        <fullName evidence="2">Purine nucleoside phosphorylase DeoD-type</fullName>
        <shortName evidence="2">PNP</shortName>
        <ecNumber evidence="2">2.4.2.1</ecNumber>
    </recommendedName>
</protein>
<dbReference type="EC" id="2.4.2.1" evidence="2"/>
<dbReference type="EMBL" id="L43967">
    <property type="protein sequence ID" value="AAC71265.2"/>
    <property type="molecule type" value="Genomic_DNA"/>
</dbReference>
<dbReference type="PIR" id="D64205">
    <property type="entry name" value="D64205"/>
</dbReference>
<dbReference type="RefSeq" id="WP_009885712.1">
    <property type="nucleotide sequence ID" value="NC_000908.2"/>
</dbReference>
<dbReference type="SMR" id="P47295"/>
<dbReference type="FunCoup" id="P47295">
    <property type="interactions" value="66"/>
</dbReference>
<dbReference type="STRING" id="243273.MG_049"/>
<dbReference type="GeneID" id="88282165"/>
<dbReference type="KEGG" id="mge:MG_049"/>
<dbReference type="eggNOG" id="COG0813">
    <property type="taxonomic scope" value="Bacteria"/>
</dbReference>
<dbReference type="HOGENOM" id="CLU_068457_2_0_14"/>
<dbReference type="InParanoid" id="P47295"/>
<dbReference type="OrthoDB" id="9782889at2"/>
<dbReference type="BioCyc" id="MGEN243273:G1GJ2-50-MONOMER"/>
<dbReference type="Proteomes" id="UP000000807">
    <property type="component" value="Chromosome"/>
</dbReference>
<dbReference type="GO" id="GO:0005829">
    <property type="term" value="C:cytosol"/>
    <property type="evidence" value="ECO:0000318"/>
    <property type="project" value="GO_Central"/>
</dbReference>
<dbReference type="GO" id="GO:0004731">
    <property type="term" value="F:purine-nucleoside phosphorylase activity"/>
    <property type="evidence" value="ECO:0000318"/>
    <property type="project" value="GO_Central"/>
</dbReference>
<dbReference type="GO" id="GO:0006152">
    <property type="term" value="P:purine nucleoside catabolic process"/>
    <property type="evidence" value="ECO:0000318"/>
    <property type="project" value="GO_Central"/>
</dbReference>
<dbReference type="CDD" id="cd09006">
    <property type="entry name" value="PNP_EcPNPI-like"/>
    <property type="match status" value="1"/>
</dbReference>
<dbReference type="Gene3D" id="3.40.50.1580">
    <property type="entry name" value="Nucleoside phosphorylase domain"/>
    <property type="match status" value="1"/>
</dbReference>
<dbReference type="HAMAP" id="MF_01627">
    <property type="entry name" value="Pur_nucleosid_phosp"/>
    <property type="match status" value="1"/>
</dbReference>
<dbReference type="InterPro" id="IPR004402">
    <property type="entry name" value="DeoD-type"/>
</dbReference>
<dbReference type="InterPro" id="IPR018016">
    <property type="entry name" value="Nucleoside_phosphorylase_CS"/>
</dbReference>
<dbReference type="InterPro" id="IPR000845">
    <property type="entry name" value="Nucleoside_phosphorylase_d"/>
</dbReference>
<dbReference type="InterPro" id="IPR035994">
    <property type="entry name" value="Nucleoside_phosphorylase_sf"/>
</dbReference>
<dbReference type="NCBIfam" id="TIGR00107">
    <property type="entry name" value="deoD"/>
    <property type="match status" value="1"/>
</dbReference>
<dbReference type="NCBIfam" id="NF004489">
    <property type="entry name" value="PRK05819.1"/>
    <property type="match status" value="1"/>
</dbReference>
<dbReference type="PANTHER" id="PTHR43691:SF11">
    <property type="entry name" value="FI09636P-RELATED"/>
    <property type="match status" value="1"/>
</dbReference>
<dbReference type="PANTHER" id="PTHR43691">
    <property type="entry name" value="URIDINE PHOSPHORYLASE"/>
    <property type="match status" value="1"/>
</dbReference>
<dbReference type="Pfam" id="PF01048">
    <property type="entry name" value="PNP_UDP_1"/>
    <property type="match status" value="1"/>
</dbReference>
<dbReference type="SUPFAM" id="SSF53167">
    <property type="entry name" value="Purine and uridine phosphorylases"/>
    <property type="match status" value="1"/>
</dbReference>
<dbReference type="PROSITE" id="PS01232">
    <property type="entry name" value="PNP_UDP_1"/>
    <property type="match status" value="1"/>
</dbReference>
<gene>
    <name evidence="2" type="primary">deoD</name>
    <name type="ordered locus">MG049</name>
</gene>
<evidence type="ECO:0000250" key="1">
    <source>
        <dbReference type="UniProtKB" id="P50389"/>
    </source>
</evidence>
<evidence type="ECO:0000255" key="2">
    <source>
        <dbReference type="HAMAP-Rule" id="MF_01627"/>
    </source>
</evidence>
<evidence type="ECO:0000269" key="3">
    <source>
    </source>
</evidence>
<evidence type="ECO:0000305" key="4"/>